<reference key="1">
    <citation type="journal article" date="2005" name="Nucleic Acids Res.">
        <title>The genome sequence of Salmonella enterica serovar Choleraesuis, a highly invasive and resistant zoonotic pathogen.</title>
        <authorList>
            <person name="Chiu C.-H."/>
            <person name="Tang P."/>
            <person name="Chu C."/>
            <person name="Hu S."/>
            <person name="Bao Q."/>
            <person name="Yu J."/>
            <person name="Chou Y.-Y."/>
            <person name="Wang H.-S."/>
            <person name="Lee Y.-S."/>
        </authorList>
    </citation>
    <scope>NUCLEOTIDE SEQUENCE [LARGE SCALE GENOMIC DNA]</scope>
    <source>
        <strain>SC-B67</strain>
    </source>
</reference>
<sequence>MSEKTFLVEIGTEELPPKALRSLAESFAANFTAELDNAGLAHGNVEWFAAPRRLALKVANLAESQPDREVEKRGPAIAQAFDAEGKPSKAAEGWARGCGITVDQAERLKTDKGEWLLYRAHVKGESTEALVPNMVATSLAKLPIPKLMRWGASDVHFVRPVHTVTLLLGDKVIPATILGIQSDRVIRGHRFMGEPEFTIDNADQYPQILLEHGKVIADYEARKAKIKADAEEAARKIGGNADLSESLLEEVASLVEWPVVLTAKFEEKFLAVPAEALVYTMKGDQKYFPVYDNAGKLLPNFIFVANIESKDPTQIISGNEKVVRPRLADAEFFFNTDRKKRLEDHLPRLQTVLFQQQLGTLRDKTDRIQALAGWIAGQIGADVNHATRAGLLSKCDLMTNMVFEFTDTQGVMGMHYARHDGEAEDVAVALNEQYQPRFAGDDLPSNPVACALAIADKMDTLAGIFGIGQHPKGDKDPFALRRAALGVLRIIVEKNLALDLQTLTEEAVRLYGDKLTNANVVDDVIDFMLGRFRAWYQDEGYTVDTIQAVLARRPTRPADFDARMKAVSHFRTLEEASALAAANKRVSNILAKATEPLNDIVHASVLKEAAEIELARHLVVLRDKLQPYFADGRYQEALIELAALRAPVDEFFENVMVNAKEKDIRINRLTLLSKLRELFLQVADISLLQ</sequence>
<name>SYGB_SALCH</name>
<dbReference type="EC" id="6.1.1.14" evidence="1"/>
<dbReference type="EMBL" id="AE017220">
    <property type="protein sequence ID" value="AAX67496.1"/>
    <property type="molecule type" value="Genomic_DNA"/>
</dbReference>
<dbReference type="RefSeq" id="WP_001541100.1">
    <property type="nucleotide sequence ID" value="NC_006905.1"/>
</dbReference>
<dbReference type="SMR" id="Q57IG6"/>
<dbReference type="KEGG" id="sec:SCH_3590"/>
<dbReference type="HOGENOM" id="CLU_007220_2_2_6"/>
<dbReference type="Proteomes" id="UP000000538">
    <property type="component" value="Chromosome"/>
</dbReference>
<dbReference type="GO" id="GO:0005829">
    <property type="term" value="C:cytosol"/>
    <property type="evidence" value="ECO:0007669"/>
    <property type="project" value="TreeGrafter"/>
</dbReference>
<dbReference type="GO" id="GO:0004814">
    <property type="term" value="F:arginine-tRNA ligase activity"/>
    <property type="evidence" value="ECO:0007669"/>
    <property type="project" value="InterPro"/>
</dbReference>
<dbReference type="GO" id="GO:0005524">
    <property type="term" value="F:ATP binding"/>
    <property type="evidence" value="ECO:0007669"/>
    <property type="project" value="UniProtKB-UniRule"/>
</dbReference>
<dbReference type="GO" id="GO:0004820">
    <property type="term" value="F:glycine-tRNA ligase activity"/>
    <property type="evidence" value="ECO:0007669"/>
    <property type="project" value="UniProtKB-UniRule"/>
</dbReference>
<dbReference type="GO" id="GO:0006420">
    <property type="term" value="P:arginyl-tRNA aminoacylation"/>
    <property type="evidence" value="ECO:0007669"/>
    <property type="project" value="InterPro"/>
</dbReference>
<dbReference type="GO" id="GO:0006426">
    <property type="term" value="P:glycyl-tRNA aminoacylation"/>
    <property type="evidence" value="ECO:0007669"/>
    <property type="project" value="UniProtKB-UniRule"/>
</dbReference>
<dbReference type="HAMAP" id="MF_00255">
    <property type="entry name" value="Gly_tRNA_synth_beta"/>
    <property type="match status" value="1"/>
</dbReference>
<dbReference type="InterPro" id="IPR008909">
    <property type="entry name" value="DALR_anticod-bd"/>
</dbReference>
<dbReference type="InterPro" id="IPR015944">
    <property type="entry name" value="Gly-tRNA-synth_bsu"/>
</dbReference>
<dbReference type="InterPro" id="IPR006194">
    <property type="entry name" value="Gly-tRNA-synth_heterodimer"/>
</dbReference>
<dbReference type="NCBIfam" id="TIGR00211">
    <property type="entry name" value="glyS"/>
    <property type="match status" value="1"/>
</dbReference>
<dbReference type="PANTHER" id="PTHR30075:SF2">
    <property type="entry name" value="GLYCINE--TRNA LIGASE, CHLOROPLASTIC_MITOCHONDRIAL 2"/>
    <property type="match status" value="1"/>
</dbReference>
<dbReference type="PANTHER" id="PTHR30075">
    <property type="entry name" value="GLYCYL-TRNA SYNTHETASE"/>
    <property type="match status" value="1"/>
</dbReference>
<dbReference type="Pfam" id="PF05746">
    <property type="entry name" value="DALR_1"/>
    <property type="match status" value="1"/>
</dbReference>
<dbReference type="Pfam" id="PF02092">
    <property type="entry name" value="tRNA_synt_2f"/>
    <property type="match status" value="1"/>
</dbReference>
<dbReference type="PRINTS" id="PR01045">
    <property type="entry name" value="TRNASYNTHGB"/>
</dbReference>
<dbReference type="SUPFAM" id="SSF109604">
    <property type="entry name" value="HD-domain/PDEase-like"/>
    <property type="match status" value="1"/>
</dbReference>
<dbReference type="PROSITE" id="PS50861">
    <property type="entry name" value="AA_TRNA_LIGASE_II_GLYAB"/>
    <property type="match status" value="1"/>
</dbReference>
<keyword id="KW-0030">Aminoacyl-tRNA synthetase</keyword>
<keyword id="KW-0067">ATP-binding</keyword>
<keyword id="KW-0963">Cytoplasm</keyword>
<keyword id="KW-0436">Ligase</keyword>
<keyword id="KW-0547">Nucleotide-binding</keyword>
<keyword id="KW-0648">Protein biosynthesis</keyword>
<organism>
    <name type="scientific">Salmonella choleraesuis (strain SC-B67)</name>
    <dbReference type="NCBI Taxonomy" id="321314"/>
    <lineage>
        <taxon>Bacteria</taxon>
        <taxon>Pseudomonadati</taxon>
        <taxon>Pseudomonadota</taxon>
        <taxon>Gammaproteobacteria</taxon>
        <taxon>Enterobacterales</taxon>
        <taxon>Enterobacteriaceae</taxon>
        <taxon>Salmonella</taxon>
    </lineage>
</organism>
<proteinExistence type="inferred from homology"/>
<protein>
    <recommendedName>
        <fullName evidence="1">Glycine--tRNA ligase beta subunit</fullName>
        <ecNumber evidence="1">6.1.1.14</ecNumber>
    </recommendedName>
    <alternativeName>
        <fullName evidence="1">Glycyl-tRNA synthetase beta subunit</fullName>
        <shortName evidence="1">GlyRS</shortName>
    </alternativeName>
</protein>
<gene>
    <name evidence="1" type="primary">glyS</name>
    <name type="ordered locus">SCH_3590</name>
</gene>
<evidence type="ECO:0000255" key="1">
    <source>
        <dbReference type="HAMAP-Rule" id="MF_00255"/>
    </source>
</evidence>
<accession>Q57IG6</accession>
<comment type="catalytic activity">
    <reaction evidence="1">
        <text>tRNA(Gly) + glycine + ATP = glycyl-tRNA(Gly) + AMP + diphosphate</text>
        <dbReference type="Rhea" id="RHEA:16013"/>
        <dbReference type="Rhea" id="RHEA-COMP:9664"/>
        <dbReference type="Rhea" id="RHEA-COMP:9683"/>
        <dbReference type="ChEBI" id="CHEBI:30616"/>
        <dbReference type="ChEBI" id="CHEBI:33019"/>
        <dbReference type="ChEBI" id="CHEBI:57305"/>
        <dbReference type="ChEBI" id="CHEBI:78442"/>
        <dbReference type="ChEBI" id="CHEBI:78522"/>
        <dbReference type="ChEBI" id="CHEBI:456215"/>
        <dbReference type="EC" id="6.1.1.14"/>
    </reaction>
</comment>
<comment type="subunit">
    <text evidence="1">Tetramer of two alpha and two beta subunits.</text>
</comment>
<comment type="subcellular location">
    <subcellularLocation>
        <location evidence="1">Cytoplasm</location>
    </subcellularLocation>
</comment>
<comment type="similarity">
    <text evidence="1">Belongs to the class-II aminoacyl-tRNA synthetase family.</text>
</comment>
<feature type="chain" id="PRO_1000006397" description="Glycine--tRNA ligase beta subunit">
    <location>
        <begin position="1"/>
        <end position="689"/>
    </location>
</feature>